<comment type="function">
    <text evidence="1">Part of the twin-arginine translocation (Tat) system that transports large folded proteins containing a characteristic twin-arginine motif in their signal peptide across membranes. TatA could form the protein-conducting channel of the Tat system.</text>
</comment>
<comment type="subunit">
    <text evidence="1">The Tat system comprises two distinct complexes: a TatABC complex, containing multiple copies of TatA, TatB and TatC subunits, and a separate TatA complex, containing only TatA subunits. Substrates initially bind to the TatABC complex, which probably triggers association of the separate TatA complex to form the active translocon.</text>
</comment>
<comment type="subcellular location">
    <subcellularLocation>
        <location evidence="1">Cell inner membrane</location>
        <topology evidence="1">Single-pass membrane protein</topology>
    </subcellularLocation>
</comment>
<comment type="similarity">
    <text evidence="1">Belongs to the TatA/E family.</text>
</comment>
<accession>B8GX57</accession>
<feature type="chain" id="PRO_1000197863" description="Sec-independent protein translocase protein TatA">
    <location>
        <begin position="1"/>
        <end position="74"/>
    </location>
</feature>
<feature type="transmembrane region" description="Helical" evidence="1">
    <location>
        <begin position="1"/>
        <end position="21"/>
    </location>
</feature>
<feature type="region of interest" description="Disordered" evidence="2">
    <location>
        <begin position="51"/>
        <end position="74"/>
    </location>
</feature>
<feature type="compositionally biased region" description="Basic and acidic residues" evidence="2">
    <location>
        <begin position="64"/>
        <end position="74"/>
    </location>
</feature>
<protein>
    <recommendedName>
        <fullName evidence="1">Sec-independent protein translocase protein TatA</fullName>
    </recommendedName>
</protein>
<keyword id="KW-0997">Cell inner membrane</keyword>
<keyword id="KW-1003">Cell membrane</keyword>
<keyword id="KW-0472">Membrane</keyword>
<keyword id="KW-0653">Protein transport</keyword>
<keyword id="KW-1185">Reference proteome</keyword>
<keyword id="KW-0811">Translocation</keyword>
<keyword id="KW-0812">Transmembrane</keyword>
<keyword id="KW-1133">Transmembrane helix</keyword>
<keyword id="KW-0813">Transport</keyword>
<gene>
    <name evidence="1" type="primary">tatA</name>
    <name type="ordered locus">CCNA_02082</name>
</gene>
<name>TATA_CAUVN</name>
<reference key="1">
    <citation type="journal article" date="2010" name="J. Bacteriol.">
        <title>The genetic basis of laboratory adaptation in Caulobacter crescentus.</title>
        <authorList>
            <person name="Marks M.E."/>
            <person name="Castro-Rojas C.M."/>
            <person name="Teiling C."/>
            <person name="Du L."/>
            <person name="Kapatral V."/>
            <person name="Walunas T.L."/>
            <person name="Crosson S."/>
        </authorList>
    </citation>
    <scope>NUCLEOTIDE SEQUENCE [LARGE SCALE GENOMIC DNA]</scope>
    <source>
        <strain>NA1000 / CB15N</strain>
    </source>
</reference>
<dbReference type="EMBL" id="CP001340">
    <property type="protein sequence ID" value="ACL95547.1"/>
    <property type="molecule type" value="Genomic_DNA"/>
</dbReference>
<dbReference type="RefSeq" id="WP_010919869.1">
    <property type="nucleotide sequence ID" value="NC_011916.1"/>
</dbReference>
<dbReference type="RefSeq" id="YP_002517455.1">
    <property type="nucleotide sequence ID" value="NC_011916.1"/>
</dbReference>
<dbReference type="SMR" id="B8GX57"/>
<dbReference type="GeneID" id="7330388"/>
<dbReference type="KEGG" id="ccs:CCNA_02082"/>
<dbReference type="PATRIC" id="fig|565050.3.peg.2040"/>
<dbReference type="HOGENOM" id="CLU_086034_5_0_5"/>
<dbReference type="OrthoDB" id="7161179at2"/>
<dbReference type="PhylomeDB" id="B8GX57"/>
<dbReference type="Proteomes" id="UP000001364">
    <property type="component" value="Chromosome"/>
</dbReference>
<dbReference type="GO" id="GO:0033281">
    <property type="term" value="C:TAT protein transport complex"/>
    <property type="evidence" value="ECO:0007669"/>
    <property type="project" value="UniProtKB-UniRule"/>
</dbReference>
<dbReference type="GO" id="GO:0008320">
    <property type="term" value="F:protein transmembrane transporter activity"/>
    <property type="evidence" value="ECO:0007669"/>
    <property type="project" value="UniProtKB-UniRule"/>
</dbReference>
<dbReference type="GO" id="GO:0043953">
    <property type="term" value="P:protein transport by the Tat complex"/>
    <property type="evidence" value="ECO:0007669"/>
    <property type="project" value="UniProtKB-UniRule"/>
</dbReference>
<dbReference type="Gene3D" id="1.20.5.3310">
    <property type="match status" value="1"/>
</dbReference>
<dbReference type="HAMAP" id="MF_00236">
    <property type="entry name" value="TatA_E"/>
    <property type="match status" value="1"/>
</dbReference>
<dbReference type="InterPro" id="IPR003369">
    <property type="entry name" value="TatA/B/E"/>
</dbReference>
<dbReference type="InterPro" id="IPR006312">
    <property type="entry name" value="TatA/E"/>
</dbReference>
<dbReference type="NCBIfam" id="NF001940">
    <property type="entry name" value="PRK00720.1"/>
    <property type="match status" value="1"/>
</dbReference>
<dbReference type="NCBIfam" id="TIGR01411">
    <property type="entry name" value="tatAE"/>
    <property type="match status" value="1"/>
</dbReference>
<dbReference type="PANTHER" id="PTHR42982">
    <property type="entry name" value="SEC-INDEPENDENT PROTEIN TRANSLOCASE PROTEIN TATA"/>
    <property type="match status" value="1"/>
</dbReference>
<dbReference type="PANTHER" id="PTHR42982:SF1">
    <property type="entry name" value="SEC-INDEPENDENT PROTEIN TRANSLOCASE PROTEIN TATA"/>
    <property type="match status" value="1"/>
</dbReference>
<dbReference type="Pfam" id="PF02416">
    <property type="entry name" value="TatA_B_E"/>
    <property type="match status" value="1"/>
</dbReference>
<organism>
    <name type="scientific">Caulobacter vibrioides (strain NA1000 / CB15N)</name>
    <name type="common">Caulobacter crescentus</name>
    <dbReference type="NCBI Taxonomy" id="565050"/>
    <lineage>
        <taxon>Bacteria</taxon>
        <taxon>Pseudomonadati</taxon>
        <taxon>Pseudomonadota</taxon>
        <taxon>Alphaproteobacteria</taxon>
        <taxon>Caulobacterales</taxon>
        <taxon>Caulobacteraceae</taxon>
        <taxon>Caulobacter</taxon>
    </lineage>
</organism>
<sequence length="74" mass="7891">MGSMSWIHWVIVLGIVALLFGGRGKLSSIMGDAAKGIKAFKDGLKDESSSEVADNKAKSALPRTEAEAEELRKS</sequence>
<evidence type="ECO:0000255" key="1">
    <source>
        <dbReference type="HAMAP-Rule" id="MF_00236"/>
    </source>
</evidence>
<evidence type="ECO:0000256" key="2">
    <source>
        <dbReference type="SAM" id="MobiDB-lite"/>
    </source>
</evidence>
<proteinExistence type="inferred from homology"/>